<gene>
    <name evidence="1" type="primary">aroC</name>
    <name type="ordered locus">mma_2174</name>
</gene>
<evidence type="ECO:0000255" key="1">
    <source>
        <dbReference type="HAMAP-Rule" id="MF_00300"/>
    </source>
</evidence>
<comment type="function">
    <text evidence="1">Catalyzes the anti-1,4-elimination of the C-3 phosphate and the C-6 proR hydrogen from 5-enolpyruvylshikimate-3-phosphate (EPSP) to yield chorismate, which is the branch point compound that serves as the starting substrate for the three terminal pathways of aromatic amino acid biosynthesis. This reaction introduces a second double bond into the aromatic ring system.</text>
</comment>
<comment type="catalytic activity">
    <reaction evidence="1">
        <text>5-O-(1-carboxyvinyl)-3-phosphoshikimate = chorismate + phosphate</text>
        <dbReference type="Rhea" id="RHEA:21020"/>
        <dbReference type="ChEBI" id="CHEBI:29748"/>
        <dbReference type="ChEBI" id="CHEBI:43474"/>
        <dbReference type="ChEBI" id="CHEBI:57701"/>
        <dbReference type="EC" id="4.2.3.5"/>
    </reaction>
</comment>
<comment type="cofactor">
    <cofactor evidence="1">
        <name>FMNH2</name>
        <dbReference type="ChEBI" id="CHEBI:57618"/>
    </cofactor>
    <text evidence="1">Reduced FMN (FMNH(2)).</text>
</comment>
<comment type="pathway">
    <text evidence="1">Metabolic intermediate biosynthesis; chorismate biosynthesis; chorismate from D-erythrose 4-phosphate and phosphoenolpyruvate: step 7/7.</text>
</comment>
<comment type="subunit">
    <text evidence="1">Homotetramer.</text>
</comment>
<comment type="similarity">
    <text evidence="1">Belongs to the chorismate synthase family.</text>
</comment>
<proteinExistence type="inferred from homology"/>
<dbReference type="EC" id="4.2.3.5" evidence="1"/>
<dbReference type="EMBL" id="CP000269">
    <property type="protein sequence ID" value="ABR88380.1"/>
    <property type="molecule type" value="Genomic_DNA"/>
</dbReference>
<dbReference type="RefSeq" id="WP_012080027.1">
    <property type="nucleotide sequence ID" value="NC_009659.1"/>
</dbReference>
<dbReference type="SMR" id="A6T017"/>
<dbReference type="STRING" id="375286.mma_2174"/>
<dbReference type="KEGG" id="mms:mma_2174"/>
<dbReference type="eggNOG" id="COG0082">
    <property type="taxonomic scope" value="Bacteria"/>
</dbReference>
<dbReference type="HOGENOM" id="CLU_034547_0_2_4"/>
<dbReference type="OrthoDB" id="9771806at2"/>
<dbReference type="UniPathway" id="UPA00053">
    <property type="reaction ID" value="UER00090"/>
</dbReference>
<dbReference type="Proteomes" id="UP000006388">
    <property type="component" value="Chromosome"/>
</dbReference>
<dbReference type="GO" id="GO:0005829">
    <property type="term" value="C:cytosol"/>
    <property type="evidence" value="ECO:0007669"/>
    <property type="project" value="TreeGrafter"/>
</dbReference>
<dbReference type="GO" id="GO:0004107">
    <property type="term" value="F:chorismate synthase activity"/>
    <property type="evidence" value="ECO:0007669"/>
    <property type="project" value="UniProtKB-UniRule"/>
</dbReference>
<dbReference type="GO" id="GO:0010181">
    <property type="term" value="F:FMN binding"/>
    <property type="evidence" value="ECO:0007669"/>
    <property type="project" value="TreeGrafter"/>
</dbReference>
<dbReference type="GO" id="GO:0008652">
    <property type="term" value="P:amino acid biosynthetic process"/>
    <property type="evidence" value="ECO:0007669"/>
    <property type="project" value="UniProtKB-KW"/>
</dbReference>
<dbReference type="GO" id="GO:0009073">
    <property type="term" value="P:aromatic amino acid family biosynthetic process"/>
    <property type="evidence" value="ECO:0007669"/>
    <property type="project" value="UniProtKB-KW"/>
</dbReference>
<dbReference type="GO" id="GO:0009423">
    <property type="term" value="P:chorismate biosynthetic process"/>
    <property type="evidence" value="ECO:0007669"/>
    <property type="project" value="UniProtKB-UniRule"/>
</dbReference>
<dbReference type="CDD" id="cd07304">
    <property type="entry name" value="Chorismate_synthase"/>
    <property type="match status" value="1"/>
</dbReference>
<dbReference type="FunFam" id="3.60.150.10:FF:000001">
    <property type="entry name" value="Chorismate synthase"/>
    <property type="match status" value="1"/>
</dbReference>
<dbReference type="Gene3D" id="3.60.150.10">
    <property type="entry name" value="Chorismate synthase AroC"/>
    <property type="match status" value="1"/>
</dbReference>
<dbReference type="HAMAP" id="MF_00300">
    <property type="entry name" value="Chorismate_synth"/>
    <property type="match status" value="1"/>
</dbReference>
<dbReference type="InterPro" id="IPR000453">
    <property type="entry name" value="Chorismate_synth"/>
</dbReference>
<dbReference type="InterPro" id="IPR035904">
    <property type="entry name" value="Chorismate_synth_AroC_sf"/>
</dbReference>
<dbReference type="InterPro" id="IPR020541">
    <property type="entry name" value="Chorismate_synthase_CS"/>
</dbReference>
<dbReference type="NCBIfam" id="TIGR00033">
    <property type="entry name" value="aroC"/>
    <property type="match status" value="1"/>
</dbReference>
<dbReference type="NCBIfam" id="NF003793">
    <property type="entry name" value="PRK05382.1"/>
    <property type="match status" value="1"/>
</dbReference>
<dbReference type="PANTHER" id="PTHR21085">
    <property type="entry name" value="CHORISMATE SYNTHASE"/>
    <property type="match status" value="1"/>
</dbReference>
<dbReference type="PANTHER" id="PTHR21085:SF0">
    <property type="entry name" value="CHORISMATE SYNTHASE"/>
    <property type="match status" value="1"/>
</dbReference>
<dbReference type="Pfam" id="PF01264">
    <property type="entry name" value="Chorismate_synt"/>
    <property type="match status" value="1"/>
</dbReference>
<dbReference type="PIRSF" id="PIRSF001456">
    <property type="entry name" value="Chorismate_synth"/>
    <property type="match status" value="1"/>
</dbReference>
<dbReference type="SUPFAM" id="SSF103263">
    <property type="entry name" value="Chorismate synthase, AroC"/>
    <property type="match status" value="1"/>
</dbReference>
<dbReference type="PROSITE" id="PS00787">
    <property type="entry name" value="CHORISMATE_SYNTHASE_1"/>
    <property type="match status" value="1"/>
</dbReference>
<dbReference type="PROSITE" id="PS00788">
    <property type="entry name" value="CHORISMATE_SYNTHASE_2"/>
    <property type="match status" value="1"/>
</dbReference>
<dbReference type="PROSITE" id="PS00789">
    <property type="entry name" value="CHORISMATE_SYNTHASE_3"/>
    <property type="match status" value="1"/>
</dbReference>
<protein>
    <recommendedName>
        <fullName evidence="1">Chorismate synthase</fullName>
        <shortName evidence="1">CS</shortName>
        <ecNumber evidence="1">4.2.3.5</ecNumber>
    </recommendedName>
    <alternativeName>
        <fullName evidence="1">5-enolpyruvylshikimate-3-phosphate phospholyase</fullName>
    </alternativeName>
</protein>
<sequence>MSGNTFGTLFTVTTFGESHGPAIGCVIDGCPPGMVLSEVDIQPELDRRKPGTSRHVTQRQESDTVEILSGVYQGKTTGTPIALLIRNEDQRSKDYGNITETFRPGHADYTYWHKYGIRDPRGGGRSSARLTAPVVGAGAIAKKWLFEKYGTTFKGCMSQLGDIEIPFEDWRHVTENPFFSANASILPQLEAYMDDLRKNGDSCGARIDVVAENVPVGLGEPIYDKLDAEIAFALMGINAVKGVEIGAGFKSVAQKGTEHGDELTPEGFATNHSGGILGGISTGQNITASIAIKPTSSIRTARHSIDKAGNPVMVETLGRHDPCVGIRATPIAESMLALVLMDHALRHRAQCGDVVVTPPPIPGSR</sequence>
<name>AROC_JANMA</name>
<organism>
    <name type="scientific">Janthinobacterium sp. (strain Marseille)</name>
    <name type="common">Minibacterium massiliensis</name>
    <dbReference type="NCBI Taxonomy" id="375286"/>
    <lineage>
        <taxon>Bacteria</taxon>
        <taxon>Pseudomonadati</taxon>
        <taxon>Pseudomonadota</taxon>
        <taxon>Betaproteobacteria</taxon>
        <taxon>Burkholderiales</taxon>
        <taxon>Oxalobacteraceae</taxon>
        <taxon>Janthinobacterium</taxon>
    </lineage>
</organism>
<accession>A6T017</accession>
<keyword id="KW-0028">Amino-acid biosynthesis</keyword>
<keyword id="KW-0057">Aromatic amino acid biosynthesis</keyword>
<keyword id="KW-0274">FAD</keyword>
<keyword id="KW-0285">Flavoprotein</keyword>
<keyword id="KW-0288">FMN</keyword>
<keyword id="KW-0456">Lyase</keyword>
<keyword id="KW-0521">NADP</keyword>
<reference key="1">
    <citation type="journal article" date="2007" name="PLoS Genet.">
        <title>Genome analysis of Minibacterium massiliensis highlights the convergent evolution of water-living bacteria.</title>
        <authorList>
            <person name="Audic S."/>
            <person name="Robert C."/>
            <person name="Campagna B."/>
            <person name="Parinello H."/>
            <person name="Claverie J.-M."/>
            <person name="Raoult D."/>
            <person name="Drancourt M."/>
        </authorList>
    </citation>
    <scope>NUCLEOTIDE SEQUENCE [LARGE SCALE GENOMIC DNA]</scope>
    <source>
        <strain>Marseille</strain>
    </source>
</reference>
<feature type="chain" id="PRO_1000022501" description="Chorismate synthase">
    <location>
        <begin position="1"/>
        <end position="365"/>
    </location>
</feature>
<feature type="binding site" evidence="1">
    <location>
        <position position="48"/>
    </location>
    <ligand>
        <name>NADP(+)</name>
        <dbReference type="ChEBI" id="CHEBI:58349"/>
    </ligand>
</feature>
<feature type="binding site" evidence="1">
    <location>
        <position position="54"/>
    </location>
    <ligand>
        <name>NADP(+)</name>
        <dbReference type="ChEBI" id="CHEBI:58349"/>
    </ligand>
</feature>
<feature type="binding site" evidence="1">
    <location>
        <begin position="125"/>
        <end position="127"/>
    </location>
    <ligand>
        <name>FMN</name>
        <dbReference type="ChEBI" id="CHEBI:58210"/>
    </ligand>
</feature>
<feature type="binding site" evidence="1">
    <location>
        <begin position="238"/>
        <end position="239"/>
    </location>
    <ligand>
        <name>FMN</name>
        <dbReference type="ChEBI" id="CHEBI:58210"/>
    </ligand>
</feature>
<feature type="binding site" evidence="1">
    <location>
        <position position="278"/>
    </location>
    <ligand>
        <name>FMN</name>
        <dbReference type="ChEBI" id="CHEBI:58210"/>
    </ligand>
</feature>
<feature type="binding site" evidence="1">
    <location>
        <begin position="293"/>
        <end position="297"/>
    </location>
    <ligand>
        <name>FMN</name>
        <dbReference type="ChEBI" id="CHEBI:58210"/>
    </ligand>
</feature>
<feature type="binding site" evidence="1">
    <location>
        <position position="319"/>
    </location>
    <ligand>
        <name>FMN</name>
        <dbReference type="ChEBI" id="CHEBI:58210"/>
    </ligand>
</feature>